<proteinExistence type="evidence at protein level"/>
<reference evidence="10" key="1">
    <citation type="journal article" date="1998" name="Science">
        <title>Chromosome 2 sequence of the human malaria parasite Plasmodium falciparum.</title>
        <authorList>
            <person name="Gardner M.J."/>
            <person name="Tettelin H."/>
            <person name="Carucci D.J."/>
            <person name="Cummings L.M."/>
            <person name="Aravind L."/>
            <person name="Koonin E.V."/>
            <person name="Shallom S.J."/>
            <person name="Mason T."/>
            <person name="Yu K."/>
            <person name="Fujii C."/>
            <person name="Pederson J."/>
            <person name="Shen K."/>
            <person name="Jing J."/>
            <person name="Aston C."/>
            <person name="Lai Z."/>
            <person name="Schwartz D.C."/>
            <person name="Pertea M."/>
            <person name="Salzberg S.L."/>
            <person name="Zhou L."/>
            <person name="Sutton G.G."/>
            <person name="Clayton R."/>
            <person name="White O."/>
            <person name="Smith H.O."/>
            <person name="Fraser C.M."/>
            <person name="Adams M.D."/>
            <person name="Venter J.C."/>
            <person name="Hoffman S.L."/>
        </authorList>
    </citation>
    <scope>NUCLEOTIDE SEQUENCE [LARGE SCALE GENOMIC DNA]</scope>
    <source>
        <strain evidence="10">3D7</strain>
    </source>
</reference>
<reference evidence="10" key="2">
    <citation type="journal article" date="2002" name="Nature">
        <title>Genome sequence of the human malaria parasite Plasmodium falciparum.</title>
        <authorList>
            <person name="Gardner M.J."/>
            <person name="Hall N."/>
            <person name="Fung E."/>
            <person name="White O."/>
            <person name="Berriman M."/>
            <person name="Hyman R.W."/>
            <person name="Carlton J.M."/>
            <person name="Pain A."/>
            <person name="Nelson K.E."/>
            <person name="Bowman S."/>
            <person name="Paulsen I.T."/>
            <person name="James K.D."/>
            <person name="Eisen J.A."/>
            <person name="Rutherford K.M."/>
            <person name="Salzberg S.L."/>
            <person name="Craig A."/>
            <person name="Kyes S."/>
            <person name="Chan M.-S."/>
            <person name="Nene V."/>
            <person name="Shallom S.J."/>
            <person name="Suh B."/>
            <person name="Peterson J."/>
            <person name="Angiuoli S."/>
            <person name="Pertea M."/>
            <person name="Allen J."/>
            <person name="Selengut J."/>
            <person name="Haft D."/>
            <person name="Mather M.W."/>
            <person name="Vaidya A.B."/>
            <person name="Martin D.M.A."/>
            <person name="Fairlamb A.H."/>
            <person name="Fraunholz M.J."/>
            <person name="Roos D.S."/>
            <person name="Ralph S.A."/>
            <person name="McFadden G.I."/>
            <person name="Cummings L.M."/>
            <person name="Subramanian G.M."/>
            <person name="Mungall C."/>
            <person name="Venter J.C."/>
            <person name="Carucci D.J."/>
            <person name="Hoffman S.L."/>
            <person name="Newbold C."/>
            <person name="Davis R.W."/>
            <person name="Fraser C.M."/>
            <person name="Barrell B.G."/>
        </authorList>
    </citation>
    <scope>NUCLEOTIDE SEQUENCE [LARGE SCALE GENOMIC DNA]</scope>
    <source>
        <strain evidence="10">3D7</strain>
    </source>
</reference>
<reference evidence="8" key="3">
    <citation type="journal article" date="2013" name="PLoS Pathog.">
        <title>The suf iron-sulfur cluster synthesis pathway is required for apicoplast maintenance in malaria parasites.</title>
        <authorList>
            <person name="Gisselberg J.E."/>
            <person name="Dellibovi-Ragheb T.A."/>
            <person name="Matthews K.A."/>
            <person name="Bosch G."/>
            <person name="Prigge S.T."/>
        </authorList>
    </citation>
    <scope>SUBCELLULAR LOCATION</scope>
    <scope>PROTEOLYTIC CLEAVAGE</scope>
    <scope>MUTAGENESIS OF CYS-154</scope>
    <source>
        <strain evidence="5">Dd2</strain>
    </source>
</reference>
<reference evidence="8" key="4">
    <citation type="journal article" date="2014" name="Antimicrob. Agents Chemother.">
        <title>Sulfur mobilization for Fe-S cluster assembly by the essential SUF pathway in the Plasmodium falciparum apicoplast and its inhibition.</title>
        <authorList>
            <person name="Charan M."/>
            <person name="Singh N."/>
            <person name="Kumar B."/>
            <person name="Srivastava K."/>
            <person name="Siddiqi M.I."/>
            <person name="Habib S."/>
        </authorList>
    </citation>
    <scope>FUNCTION</scope>
    <scope>SUBUNIT</scope>
    <scope>INTERACTION WITH SUFS</scope>
    <scope>SUBCELLULAR LOCATION</scope>
    <scope>PROTEOLYTIC CLEAVAGE</scope>
    <source>
        <strain evidence="6">3D7</strain>
    </source>
</reference>
<reference evidence="8" key="5">
    <citation type="journal article" date="2023" name="Elife">
        <title>The Plasmodium falciparum apicoplast cysteine desulfurase provides sulfur for both iron-sulfur cluster assembly and tRNA modification.</title>
        <authorList>
            <person name="Swift R.P."/>
            <person name="Elahi R."/>
            <person name="Rajaram K."/>
            <person name="Liu H.B."/>
            <person name="Prigge S.T."/>
        </authorList>
    </citation>
    <scope>DISRUPTION PHENOTYPE</scope>
    <source>
        <strain evidence="7">NF54</strain>
    </source>
</reference>
<organism evidence="10">
    <name type="scientific">Plasmodium falciparum (isolate 3D7)</name>
    <dbReference type="NCBI Taxonomy" id="36329"/>
    <lineage>
        <taxon>Eukaryota</taxon>
        <taxon>Sar</taxon>
        <taxon>Alveolata</taxon>
        <taxon>Apicomplexa</taxon>
        <taxon>Aconoidasida</taxon>
        <taxon>Haemosporida</taxon>
        <taxon>Plasmodiidae</taxon>
        <taxon>Plasmodium</taxon>
        <taxon>Plasmodium (Laverania)</taxon>
    </lineage>
</organism>
<name>SUFE_PLAF7</name>
<keyword id="KW-0933">Apicoplast</keyword>
<keyword id="KW-0934">Plastid</keyword>
<keyword id="KW-1185">Reference proteome</keyword>
<feature type="chain" id="PRO_0000459481" description="Cysteine desulfuration protein SufE">
    <location>
        <begin position="1"/>
        <end position="249"/>
    </location>
</feature>
<feature type="active site" description="Cysteine persulfide intermediate" evidence="1">
    <location>
        <position position="154"/>
    </location>
</feature>
<feature type="mutagenesis site" description="No effect on protein trafficking and subcellular localization. No significant effects on apicoplast metabolism." evidence="2">
    <original>C</original>
    <variation>S</variation>
    <location>
        <position position="154"/>
    </location>
</feature>
<protein>
    <recommendedName>
        <fullName evidence="8">Cysteine desulfuration protein SufE</fullName>
        <shortName evidence="6">PfSufE</shortName>
    </recommendedName>
</protein>
<comment type="function">
    <text evidence="1 3">Participates in sulfur mobilization (SUF) pathway for iron-sulfur (Fe-S) cluster biogenesis (PubMed:24709262). Enhances cysteine desulfurase activity of SufS (PubMed:24709262). Probably functions as a sulfur acceptor for SufS (By similarity).</text>
</comment>
<comment type="pathway">
    <text evidence="8">Cofactor biosynthesis; iron-sulfur cluster biosynthesis.</text>
</comment>
<comment type="subunit">
    <text evidence="3">Monomer (PubMed:24709262). Interacts with SufS; interaction enhances cysteine desulfurase activity of SufS (PubMed:24709262).</text>
</comment>
<comment type="subcellular location">
    <subcellularLocation>
        <location evidence="2 3">Plastid</location>
        <location evidence="2 3">Apicoplast</location>
    </subcellularLocation>
</comment>
<comment type="PTM">
    <text evidence="2 3">Proteolytically cleaved.</text>
</comment>
<comment type="disruption phenotype">
    <text evidence="4">Parasites require mevalonate for survival (PubMed:37166116). No significant effects on apicoplast morphology (PubMed:37166116).</text>
</comment>
<comment type="similarity">
    <text evidence="8">Belongs to the SufE family.</text>
</comment>
<gene>
    <name evidence="5 6 7" type="primary">SufE</name>
    <name evidence="9" type="ORF">PF3D7_0206100</name>
</gene>
<accession>O96155</accession>
<evidence type="ECO:0000250" key="1">
    <source>
        <dbReference type="UniProtKB" id="P76194"/>
    </source>
</evidence>
<evidence type="ECO:0000269" key="2">
    <source>
    </source>
</evidence>
<evidence type="ECO:0000269" key="3">
    <source>
    </source>
</evidence>
<evidence type="ECO:0000269" key="4">
    <source>
    </source>
</evidence>
<evidence type="ECO:0000303" key="5">
    <source>
    </source>
</evidence>
<evidence type="ECO:0000303" key="6">
    <source>
    </source>
</evidence>
<evidence type="ECO:0000303" key="7">
    <source>
    </source>
</evidence>
<evidence type="ECO:0000305" key="8"/>
<evidence type="ECO:0000312" key="9">
    <source>
        <dbReference type="EMBL" id="CZT98074.1"/>
    </source>
</evidence>
<evidence type="ECO:0000312" key="10">
    <source>
        <dbReference type="Proteomes" id="UP000001450"/>
    </source>
</evidence>
<sequence length="249" mass="29103">MNKKKLKAHFFVLYIICSCFILILSIKHDKYNNESKKKKKFFKIRTKIIFYKLKKVNQIKNAPQLYIQFYKPKCHKTTQSLKDIFNELSGNKNPENPKNIDEYNLTPKLKKTVELFQSMPNSPYYKSQQVILMGKKISSMPDKHKIRQNQVLGCQSVVYIYPKVEENEDKKKVIVWLGHSDGLLTKGIVYILTDGLSGYMPEDILKVNPNFITLTGISEFLTMSRINGYLNIMNKIKIFCTNILKNMDN</sequence>
<dbReference type="EMBL" id="LN999943">
    <property type="protein sequence ID" value="CZT98074.1"/>
    <property type="molecule type" value="Genomic_DNA"/>
</dbReference>
<dbReference type="RefSeq" id="XP_001349571.2">
    <property type="nucleotide sequence ID" value="XM_001349535.2"/>
</dbReference>
<dbReference type="SMR" id="O96155"/>
<dbReference type="STRING" id="36329.O96155"/>
<dbReference type="PaxDb" id="5833-PFB0270w"/>
<dbReference type="EnsemblProtists" id="CZT98074">
    <property type="protein sequence ID" value="CZT98074"/>
    <property type="gene ID" value="PF3D7_0206100"/>
</dbReference>
<dbReference type="GeneID" id="812653"/>
<dbReference type="KEGG" id="pfa:PF3D7_0206100"/>
<dbReference type="VEuPathDB" id="PlasmoDB:PF3D7_0206100"/>
<dbReference type="HOGENOM" id="CLU_1126417_0_0_1"/>
<dbReference type="InParanoid" id="O96155"/>
<dbReference type="OMA" id="CQSTVYI"/>
<dbReference type="OrthoDB" id="411584at2759"/>
<dbReference type="PhylomeDB" id="O96155"/>
<dbReference type="UniPathway" id="UPA00266"/>
<dbReference type="Proteomes" id="UP000001450">
    <property type="component" value="Chromosome 2"/>
</dbReference>
<dbReference type="GO" id="GO:0020011">
    <property type="term" value="C:apicoplast"/>
    <property type="evidence" value="ECO:0000314"/>
    <property type="project" value="GeneDB"/>
</dbReference>
<dbReference type="FunFam" id="3.90.1010.10:FF:000012">
    <property type="entry name" value="Cysteine desulfuration protein SufE"/>
    <property type="match status" value="1"/>
</dbReference>
<dbReference type="Gene3D" id="3.90.1010.10">
    <property type="match status" value="1"/>
</dbReference>
<dbReference type="InterPro" id="IPR003808">
    <property type="entry name" value="Fe-S_metab-assoc_dom"/>
</dbReference>
<dbReference type="PANTHER" id="PTHR43597:SF5">
    <property type="entry name" value="SUFE-LIKE PROTEIN 2, CHLOROPLASTIC"/>
    <property type="match status" value="1"/>
</dbReference>
<dbReference type="PANTHER" id="PTHR43597">
    <property type="entry name" value="SULFUR ACCEPTOR PROTEIN CSDE"/>
    <property type="match status" value="1"/>
</dbReference>
<dbReference type="Pfam" id="PF02657">
    <property type="entry name" value="SufE"/>
    <property type="match status" value="1"/>
</dbReference>
<dbReference type="SUPFAM" id="SSF82649">
    <property type="entry name" value="SufE/NifU"/>
    <property type="match status" value="1"/>
</dbReference>
<dbReference type="PROSITE" id="PS51257">
    <property type="entry name" value="PROKAR_LIPOPROTEIN"/>
    <property type="match status" value="1"/>
</dbReference>